<name>DAPD_CERS1</name>
<gene>
    <name evidence="1" type="primary">dapD</name>
    <name type="ordered locus">Rsph17029_2792</name>
</gene>
<accession>A3PNH8</accession>
<organism>
    <name type="scientific">Cereibacter sphaeroides (strain ATCC 17029 / ATH 2.4.9)</name>
    <name type="common">Rhodobacter sphaeroides</name>
    <dbReference type="NCBI Taxonomy" id="349101"/>
    <lineage>
        <taxon>Bacteria</taxon>
        <taxon>Pseudomonadati</taxon>
        <taxon>Pseudomonadota</taxon>
        <taxon>Alphaproteobacteria</taxon>
        <taxon>Rhodobacterales</taxon>
        <taxon>Paracoccaceae</taxon>
        <taxon>Cereibacter</taxon>
    </lineage>
</organism>
<dbReference type="EC" id="2.3.1.117" evidence="1"/>
<dbReference type="EMBL" id="CP000577">
    <property type="protein sequence ID" value="ABN77894.1"/>
    <property type="molecule type" value="Genomic_DNA"/>
</dbReference>
<dbReference type="RefSeq" id="WP_011841893.1">
    <property type="nucleotide sequence ID" value="NC_009049.1"/>
</dbReference>
<dbReference type="SMR" id="A3PNH8"/>
<dbReference type="KEGG" id="rsh:Rsph17029_2792"/>
<dbReference type="HOGENOM" id="CLU_050859_0_1_5"/>
<dbReference type="UniPathway" id="UPA00034">
    <property type="reaction ID" value="UER00019"/>
</dbReference>
<dbReference type="GO" id="GO:0005737">
    <property type="term" value="C:cytoplasm"/>
    <property type="evidence" value="ECO:0007669"/>
    <property type="project" value="UniProtKB-SubCell"/>
</dbReference>
<dbReference type="GO" id="GO:0008666">
    <property type="term" value="F:2,3,4,5-tetrahydropyridine-2,6-dicarboxylate N-succinyltransferase activity"/>
    <property type="evidence" value="ECO:0007669"/>
    <property type="project" value="UniProtKB-UniRule"/>
</dbReference>
<dbReference type="GO" id="GO:0016779">
    <property type="term" value="F:nucleotidyltransferase activity"/>
    <property type="evidence" value="ECO:0007669"/>
    <property type="project" value="TreeGrafter"/>
</dbReference>
<dbReference type="GO" id="GO:0019877">
    <property type="term" value="P:diaminopimelate biosynthetic process"/>
    <property type="evidence" value="ECO:0007669"/>
    <property type="project" value="UniProtKB-UniRule"/>
</dbReference>
<dbReference type="GO" id="GO:0009089">
    <property type="term" value="P:lysine biosynthetic process via diaminopimelate"/>
    <property type="evidence" value="ECO:0007669"/>
    <property type="project" value="UniProtKB-UniRule"/>
</dbReference>
<dbReference type="CDD" id="cd03350">
    <property type="entry name" value="LbH_THP_succinylT"/>
    <property type="match status" value="1"/>
</dbReference>
<dbReference type="Gene3D" id="2.160.10.10">
    <property type="entry name" value="Hexapeptide repeat proteins"/>
    <property type="match status" value="1"/>
</dbReference>
<dbReference type="Gene3D" id="1.10.166.10">
    <property type="entry name" value="Tetrahydrodipicolinate-N-succinyltransferase, N-terminal domain"/>
    <property type="match status" value="1"/>
</dbReference>
<dbReference type="HAMAP" id="MF_00811">
    <property type="entry name" value="DapD"/>
    <property type="match status" value="1"/>
</dbReference>
<dbReference type="InterPro" id="IPR005664">
    <property type="entry name" value="DapD_Trfase_Hexpep_rpt_fam"/>
</dbReference>
<dbReference type="InterPro" id="IPR001451">
    <property type="entry name" value="Hexapep"/>
</dbReference>
<dbReference type="InterPro" id="IPR018357">
    <property type="entry name" value="Hexapep_transf_CS"/>
</dbReference>
<dbReference type="InterPro" id="IPR023180">
    <property type="entry name" value="THP_succinylTrfase_dom1"/>
</dbReference>
<dbReference type="InterPro" id="IPR037133">
    <property type="entry name" value="THP_succinylTrfase_N_sf"/>
</dbReference>
<dbReference type="InterPro" id="IPR011004">
    <property type="entry name" value="Trimer_LpxA-like_sf"/>
</dbReference>
<dbReference type="NCBIfam" id="TIGR00965">
    <property type="entry name" value="dapD"/>
    <property type="match status" value="1"/>
</dbReference>
<dbReference type="NCBIfam" id="NF008808">
    <property type="entry name" value="PRK11830.1"/>
    <property type="match status" value="1"/>
</dbReference>
<dbReference type="PANTHER" id="PTHR19136:SF52">
    <property type="entry name" value="2,3,4,5-TETRAHYDROPYRIDINE-2,6-DICARBOXYLATE N-SUCCINYLTRANSFERASE"/>
    <property type="match status" value="1"/>
</dbReference>
<dbReference type="PANTHER" id="PTHR19136">
    <property type="entry name" value="MOLYBDENUM COFACTOR GUANYLYLTRANSFERASE"/>
    <property type="match status" value="1"/>
</dbReference>
<dbReference type="Pfam" id="PF14602">
    <property type="entry name" value="Hexapep_2"/>
    <property type="match status" value="1"/>
</dbReference>
<dbReference type="Pfam" id="PF14805">
    <property type="entry name" value="THDPS_N_2"/>
    <property type="match status" value="1"/>
</dbReference>
<dbReference type="SUPFAM" id="SSF51161">
    <property type="entry name" value="Trimeric LpxA-like enzymes"/>
    <property type="match status" value="1"/>
</dbReference>
<dbReference type="PROSITE" id="PS00101">
    <property type="entry name" value="HEXAPEP_TRANSFERASES"/>
    <property type="match status" value="1"/>
</dbReference>
<evidence type="ECO:0000255" key="1">
    <source>
        <dbReference type="HAMAP-Rule" id="MF_00811"/>
    </source>
</evidence>
<protein>
    <recommendedName>
        <fullName evidence="1">2,3,4,5-tetrahydropyridine-2,6-dicarboxylate N-succinyltransferase</fullName>
        <ecNumber evidence="1">2.3.1.117</ecNumber>
    </recommendedName>
    <alternativeName>
        <fullName evidence="1">Tetrahydrodipicolinate N-succinyltransferase</fullName>
        <shortName evidence="1">THDP succinyltransferase</shortName>
        <shortName evidence="1">THP succinyltransferase</shortName>
        <shortName evidence="1">Tetrahydropicolinate succinylase</shortName>
    </alternativeName>
</protein>
<proteinExistence type="inferred from homology"/>
<keyword id="KW-0012">Acyltransferase</keyword>
<keyword id="KW-0028">Amino-acid biosynthesis</keyword>
<keyword id="KW-0963">Cytoplasm</keyword>
<keyword id="KW-0220">Diaminopimelate biosynthesis</keyword>
<keyword id="KW-0457">Lysine biosynthesis</keyword>
<keyword id="KW-0677">Repeat</keyword>
<keyword id="KW-0808">Transferase</keyword>
<feature type="chain" id="PRO_1000047174" description="2,3,4,5-tetrahydropyridine-2,6-dicarboxylate N-succinyltransferase">
    <location>
        <begin position="1"/>
        <end position="274"/>
    </location>
</feature>
<feature type="binding site" evidence="1">
    <location>
        <position position="107"/>
    </location>
    <ligand>
        <name>substrate</name>
    </ligand>
</feature>
<feature type="binding site" evidence="1">
    <location>
        <position position="144"/>
    </location>
    <ligand>
        <name>substrate</name>
    </ligand>
</feature>
<reference key="1">
    <citation type="submission" date="2007-02" db="EMBL/GenBank/DDBJ databases">
        <title>Complete sequence of chromosome 1 of Rhodobacter sphaeroides ATCC 17029.</title>
        <authorList>
            <person name="Copeland A."/>
            <person name="Lucas S."/>
            <person name="Lapidus A."/>
            <person name="Barry K."/>
            <person name="Detter J.C."/>
            <person name="Glavina del Rio T."/>
            <person name="Hammon N."/>
            <person name="Israni S."/>
            <person name="Dalin E."/>
            <person name="Tice H."/>
            <person name="Pitluck S."/>
            <person name="Kiss H."/>
            <person name="Brettin T."/>
            <person name="Bruce D."/>
            <person name="Han C."/>
            <person name="Tapia R."/>
            <person name="Gilna P."/>
            <person name="Schmutz J."/>
            <person name="Larimer F."/>
            <person name="Land M."/>
            <person name="Hauser L."/>
            <person name="Kyrpides N."/>
            <person name="Mikhailova N."/>
            <person name="Richardson P."/>
            <person name="Mackenzie C."/>
            <person name="Choudhary M."/>
            <person name="Donohue T.J."/>
            <person name="Kaplan S."/>
        </authorList>
    </citation>
    <scope>NUCLEOTIDE SEQUENCE [LARGE SCALE GENOMIC DNA]</scope>
    <source>
        <strain>ATCC 17029 / ATH 2.4.9</strain>
    </source>
</reference>
<comment type="catalytic activity">
    <reaction evidence="1">
        <text>(S)-2,3,4,5-tetrahydrodipicolinate + succinyl-CoA + H2O = (S)-2-succinylamino-6-oxoheptanedioate + CoA</text>
        <dbReference type="Rhea" id="RHEA:17325"/>
        <dbReference type="ChEBI" id="CHEBI:15377"/>
        <dbReference type="ChEBI" id="CHEBI:15685"/>
        <dbReference type="ChEBI" id="CHEBI:16845"/>
        <dbReference type="ChEBI" id="CHEBI:57287"/>
        <dbReference type="ChEBI" id="CHEBI:57292"/>
        <dbReference type="EC" id="2.3.1.117"/>
    </reaction>
</comment>
<comment type="pathway">
    <text evidence="1">Amino-acid biosynthesis; L-lysine biosynthesis via DAP pathway; LL-2,6-diaminopimelate from (S)-tetrahydrodipicolinate (succinylase route): step 1/3.</text>
</comment>
<comment type="subunit">
    <text evidence="1">Homotrimer.</text>
</comment>
<comment type="subcellular location">
    <subcellularLocation>
        <location evidence="1">Cytoplasm</location>
    </subcellularLocation>
</comment>
<comment type="similarity">
    <text evidence="1">Belongs to the transferase hexapeptide repeat family.</text>
</comment>
<sequence>MSYSALEAAIEAAWEARETITPATKGETREAIEATLEALDKGSLRVAEKRGADWHVNQWAKKAVLLGFRLKDMEVQTGGPQAGTWWDKVDSKFAQWGEAQWKAAGFRAVPNCIVRRSAYIARGVVLMPSFVNLGAYVDESTMVDTWATVGSCAQIGKNVHLSGGVGIGGVLEPMQAGPTIIEDNCFIGARSEVVEGCIVREGSVLGMGVFIGKSTKIVDRETGEVMYGEVPAGSVVVAGSMPSKGGVNLYCAVIVKRVDAQTRSKTSINELLRD</sequence>